<gene>
    <name evidence="1" type="primary">psbF</name>
</gene>
<proteinExistence type="inferred from homology"/>
<geneLocation type="chloroplast"/>
<sequence>MTIDRTYPIFTVRWLAVHGLAVPTVFFLGSISAMQFIQR</sequence>
<feature type="chain" id="PRO_0000200458" description="Cytochrome b559 subunit beta">
    <location>
        <begin position="1"/>
        <end position="39"/>
    </location>
</feature>
<feature type="transmembrane region" description="Helical" evidence="1">
    <location>
        <begin position="14"/>
        <end position="30"/>
    </location>
</feature>
<feature type="binding site" description="axial binding residue" evidence="1">
    <location>
        <position position="18"/>
    </location>
    <ligand>
        <name>heme</name>
        <dbReference type="ChEBI" id="CHEBI:30413"/>
        <note>ligand shared with alpha subunit</note>
    </ligand>
    <ligandPart>
        <name>Fe</name>
        <dbReference type="ChEBI" id="CHEBI:18248"/>
    </ligandPart>
</feature>
<organism>
    <name type="scientific">Taxus brevifolia</name>
    <name type="common">Pacific yew</name>
    <dbReference type="NCBI Taxonomy" id="46220"/>
    <lineage>
        <taxon>Eukaryota</taxon>
        <taxon>Viridiplantae</taxon>
        <taxon>Streptophyta</taxon>
        <taxon>Embryophyta</taxon>
        <taxon>Tracheophyta</taxon>
        <taxon>Spermatophyta</taxon>
        <taxon>Pinopsida</taxon>
        <taxon>Pinidae</taxon>
        <taxon>Conifers II</taxon>
        <taxon>Cupressales</taxon>
        <taxon>Taxaceae</taxon>
        <taxon>Taxus</taxon>
    </lineage>
</organism>
<protein>
    <recommendedName>
        <fullName evidence="1">Cytochrome b559 subunit beta</fullName>
    </recommendedName>
    <alternativeName>
        <fullName evidence="1">PSII reaction center subunit VI</fullName>
    </alternativeName>
</protein>
<keyword id="KW-0150">Chloroplast</keyword>
<keyword id="KW-0249">Electron transport</keyword>
<keyword id="KW-0349">Heme</keyword>
<keyword id="KW-0408">Iron</keyword>
<keyword id="KW-0472">Membrane</keyword>
<keyword id="KW-0479">Metal-binding</keyword>
<keyword id="KW-0602">Photosynthesis</keyword>
<keyword id="KW-0604">Photosystem II</keyword>
<keyword id="KW-0934">Plastid</keyword>
<keyword id="KW-0793">Thylakoid</keyword>
<keyword id="KW-0812">Transmembrane</keyword>
<keyword id="KW-1133">Transmembrane helix</keyword>
<keyword id="KW-0813">Transport</keyword>
<evidence type="ECO:0000255" key="1">
    <source>
        <dbReference type="HAMAP-Rule" id="MF_00643"/>
    </source>
</evidence>
<name>PSBF_TAXBR</name>
<reference key="1">
    <citation type="submission" date="2002-07" db="EMBL/GenBank/DDBJ databases">
        <title>Parsing out signal and noise for seed-plant phylogenetic inference.</title>
        <authorList>
            <person name="Graham S.W."/>
            <person name="Rai H.S."/>
            <person name="Ikegami K."/>
            <person name="Reeves P.A."/>
            <person name="Olmstead R.G."/>
        </authorList>
    </citation>
    <scope>NUCLEOTIDE SEQUENCE [GENOMIC DNA]</scope>
</reference>
<accession>Q6EYN1</accession>
<dbReference type="EMBL" id="AF528889">
    <property type="protein sequence ID" value="AAQ09342.1"/>
    <property type="molecule type" value="Genomic_DNA"/>
</dbReference>
<dbReference type="RefSeq" id="YP_009578772.1">
    <property type="nucleotide sequence ID" value="NC_041502.1"/>
</dbReference>
<dbReference type="SMR" id="Q6EYN1"/>
<dbReference type="GeneID" id="39704598"/>
<dbReference type="GO" id="GO:0009535">
    <property type="term" value="C:chloroplast thylakoid membrane"/>
    <property type="evidence" value="ECO:0007669"/>
    <property type="project" value="UniProtKB-SubCell"/>
</dbReference>
<dbReference type="GO" id="GO:0009539">
    <property type="term" value="C:photosystem II reaction center"/>
    <property type="evidence" value="ECO:0007669"/>
    <property type="project" value="InterPro"/>
</dbReference>
<dbReference type="GO" id="GO:0009055">
    <property type="term" value="F:electron transfer activity"/>
    <property type="evidence" value="ECO:0007669"/>
    <property type="project" value="UniProtKB-UniRule"/>
</dbReference>
<dbReference type="GO" id="GO:0020037">
    <property type="term" value="F:heme binding"/>
    <property type="evidence" value="ECO:0007669"/>
    <property type="project" value="InterPro"/>
</dbReference>
<dbReference type="GO" id="GO:0005506">
    <property type="term" value="F:iron ion binding"/>
    <property type="evidence" value="ECO:0007669"/>
    <property type="project" value="UniProtKB-UniRule"/>
</dbReference>
<dbReference type="GO" id="GO:0009767">
    <property type="term" value="P:photosynthetic electron transport chain"/>
    <property type="evidence" value="ECO:0007669"/>
    <property type="project" value="InterPro"/>
</dbReference>
<dbReference type="HAMAP" id="MF_00643">
    <property type="entry name" value="PSII_PsbF"/>
    <property type="match status" value="1"/>
</dbReference>
<dbReference type="InterPro" id="IPR006241">
    <property type="entry name" value="PSII_cyt_b559_bsu"/>
</dbReference>
<dbReference type="InterPro" id="IPR006216">
    <property type="entry name" value="PSII_cyt_b559_CS"/>
</dbReference>
<dbReference type="InterPro" id="IPR013081">
    <property type="entry name" value="PSII_cyt_b559_N"/>
</dbReference>
<dbReference type="NCBIfam" id="TIGR01333">
    <property type="entry name" value="cyt_b559_beta"/>
    <property type="match status" value="1"/>
</dbReference>
<dbReference type="Pfam" id="PF00283">
    <property type="entry name" value="Cytochrom_B559"/>
    <property type="match status" value="1"/>
</dbReference>
<dbReference type="PIRSF" id="PIRSF000037">
    <property type="entry name" value="PsbF"/>
    <property type="match status" value="1"/>
</dbReference>
<dbReference type="SUPFAM" id="SSF161045">
    <property type="entry name" value="Cytochrome b559 subunits"/>
    <property type="match status" value="1"/>
</dbReference>
<dbReference type="PROSITE" id="PS00537">
    <property type="entry name" value="CYTOCHROME_B559"/>
    <property type="match status" value="1"/>
</dbReference>
<comment type="function">
    <text evidence="1">This b-type cytochrome is tightly associated with the reaction center of photosystem II (PSII). PSII is a light-driven water:plastoquinone oxidoreductase that uses light energy to abstract electrons from H(2)O, generating O(2) and a proton gradient subsequently used for ATP formation. It consists of a core antenna complex that captures photons, and an electron transfer chain that converts photonic excitation into a charge separation.</text>
</comment>
<comment type="cofactor">
    <cofactor evidence="1">
        <name>heme b</name>
        <dbReference type="ChEBI" id="CHEBI:60344"/>
    </cofactor>
    <text evidence="1">With its partner (PsbE) binds heme. PSII binds additional chlorophylls, carotenoids and specific lipids.</text>
</comment>
<comment type="subunit">
    <text evidence="1">Heterodimer of an alpha subunit and a beta subunit. PSII is composed of 1 copy each of membrane proteins PsbA, PsbB, PsbC, PsbD, PsbE, PsbF, PsbH, PsbI, PsbJ, PsbK, PsbL, PsbM, PsbT, PsbX, PsbY, PsbZ, Psb30/Ycf12, at least 3 peripheral proteins of the oxygen-evolving complex and a large number of cofactors. It forms dimeric complexes.</text>
</comment>
<comment type="subcellular location">
    <subcellularLocation>
        <location evidence="1">Plastid</location>
        <location evidence="1">Chloroplast thylakoid membrane</location>
        <topology evidence="1">Single-pass membrane protein</topology>
    </subcellularLocation>
</comment>
<comment type="similarity">
    <text evidence="1">Belongs to the PsbE/PsbF family.</text>
</comment>